<name>DCLK_DROPS</name>
<reference evidence="8" key="1">
    <citation type="journal article" date="2005" name="Genome Res.">
        <title>Comparative genome sequencing of Drosophila pseudoobscura: chromosomal, gene, and cis-element evolution.</title>
        <authorList>
            <person name="Richards S."/>
            <person name="Liu Y."/>
            <person name="Bettencourt B.R."/>
            <person name="Hradecky P."/>
            <person name="Letovsky S."/>
            <person name="Nielsen R."/>
            <person name="Thornton K."/>
            <person name="Hubisz M.J."/>
            <person name="Chen R."/>
            <person name="Meisel R.P."/>
            <person name="Couronne O."/>
            <person name="Hua S."/>
            <person name="Smith M.A."/>
            <person name="Zhang P."/>
            <person name="Liu J."/>
            <person name="Bussemaker H.J."/>
            <person name="van Batenburg M.F."/>
            <person name="Howells S.L."/>
            <person name="Scherer S.E."/>
            <person name="Sodergren E."/>
            <person name="Matthews B.B."/>
            <person name="Crosby M.A."/>
            <person name="Schroeder A.J."/>
            <person name="Ortiz-Barrientos D."/>
            <person name="Rives C.M."/>
            <person name="Metzker M.L."/>
            <person name="Muzny D.M."/>
            <person name="Scott G."/>
            <person name="Steffen D."/>
            <person name="Wheeler D.A."/>
            <person name="Worley K.C."/>
            <person name="Havlak P."/>
            <person name="Durbin K.J."/>
            <person name="Egan A."/>
            <person name="Gill R."/>
            <person name="Hume J."/>
            <person name="Morgan M.B."/>
            <person name="Miner G."/>
            <person name="Hamilton C."/>
            <person name="Huang Y."/>
            <person name="Waldron L."/>
            <person name="Verduzco D."/>
            <person name="Clerc-Blankenburg K.P."/>
            <person name="Dubchak I."/>
            <person name="Noor M.A.F."/>
            <person name="Anderson W."/>
            <person name="White K.P."/>
            <person name="Clark A.G."/>
            <person name="Schaeffer S.W."/>
            <person name="Gelbart W.M."/>
            <person name="Weinstock G.M."/>
            <person name="Gibbs R.A."/>
        </authorList>
    </citation>
    <scope>NUCLEOTIDE SEQUENCE [LARGE SCALE GENOMIC DNA]</scope>
    <source>
        <strain>MV2-25 / Tucson 14011-0121.94</strain>
    </source>
</reference>
<feature type="chain" id="PRO_0000392569" description="Serine/threonine-protein kinase GA29083">
    <location>
        <begin position="1"/>
        <end position="755"/>
    </location>
</feature>
<feature type="domain" description="Doublecortin 1" evidence="4">
    <location>
        <begin position="157"/>
        <end position="243"/>
    </location>
</feature>
<feature type="domain" description="Doublecortin 2" evidence="4">
    <location>
        <begin position="314"/>
        <end position="397"/>
    </location>
</feature>
<feature type="domain" description="Protein kinase" evidence="5">
    <location>
        <begin position="484"/>
        <end position="742"/>
    </location>
</feature>
<feature type="region of interest" description="Disordered" evidence="7">
    <location>
        <begin position="18"/>
        <end position="128"/>
    </location>
</feature>
<feature type="compositionally biased region" description="Low complexity" evidence="7">
    <location>
        <begin position="18"/>
        <end position="52"/>
    </location>
</feature>
<feature type="compositionally biased region" description="Basic and acidic residues" evidence="7">
    <location>
        <begin position="53"/>
        <end position="66"/>
    </location>
</feature>
<feature type="compositionally biased region" description="Basic and acidic residues" evidence="7">
    <location>
        <begin position="74"/>
        <end position="84"/>
    </location>
</feature>
<feature type="compositionally biased region" description="Polar residues" evidence="7">
    <location>
        <begin position="87"/>
        <end position="99"/>
    </location>
</feature>
<feature type="compositionally biased region" description="Low complexity" evidence="7">
    <location>
        <begin position="100"/>
        <end position="128"/>
    </location>
</feature>
<feature type="active site" description="Proton acceptor" evidence="1 5 6">
    <location>
        <position position="605"/>
    </location>
</feature>
<feature type="binding site" evidence="1 5">
    <location>
        <begin position="490"/>
        <end position="498"/>
    </location>
    <ligand>
        <name>ATP</name>
        <dbReference type="ChEBI" id="CHEBI:30616"/>
    </ligand>
</feature>
<feature type="binding site" evidence="1 5">
    <location>
        <position position="513"/>
    </location>
    <ligand>
        <name>ATP</name>
        <dbReference type="ChEBI" id="CHEBI:30616"/>
    </ligand>
</feature>
<sequence>MEVHNSLHCTAPVLSSLQASASGSGTPKKTAASSAAAQNSKQLLDQLSQQQKAQEEAETHSRRDCDSPASSNSEPEKDLDELRDLNGSLTGSGSVGKSNGSLSGASSTTSAPAGTSTPGSANTNGSASGAASLSVVSATAHLKKRITSSRTPTRKAHRIKFYRNGDRFYPGITIPVSNERYRSFESLYEDLTRLLEENVKIPGAVRTIYDMVGKKITALEELEDGQSYVCSCNNENFKKVDYNTSSQPLANLTLANNSRTSSHRLAKLQRPASPLKNGVLNSIAPVPVGGGAAANGSPLNTSRFSERDSVVHPRIVTLIRNGTKPRRIIRLLLNKRNSPSFDHVLTAITQVVRLDTGYVRKVFTLSGVSVLQLSDFFGSDDVFFAYGTERVNTVEDFKLESEEQRAINAIRKTLRTAGTACKGPKPKMPVKSKKAYPPGELKAQAEAQLQASAAPANEDEEQAALLKSTGVEVAELPAAIRDNYTLSQIIGDGNFAIVLKIKDRQTGIPHALKIIDKSKCKGKEHYIDAEVRVMKKLHHPHIISLIMDVDQDTNMYLVLEYVSGGDLFDAITQVTRFSESQSRIMIRHLGSAMSYLHSMGIVHRDIKPENLLVELDDFGNVVQLKLADFGLACEVTEPLYAVCGTPTYVAPEILLEVGYGLKIDVWAAGIILYILLCGFPPFVAPDNQQEPLFDAIISGVYEFPDPYWSDIGDGVRDLIANMLQSDPDVRFTSEDILDHYWTMGNEEIGCGDYSR</sequence>
<proteinExistence type="inferred from homology"/>
<accession>B5DK35</accession>
<organism>
    <name type="scientific">Drosophila pseudoobscura pseudoobscura</name>
    <name type="common">Fruit fly</name>
    <dbReference type="NCBI Taxonomy" id="46245"/>
    <lineage>
        <taxon>Eukaryota</taxon>
        <taxon>Metazoa</taxon>
        <taxon>Ecdysozoa</taxon>
        <taxon>Arthropoda</taxon>
        <taxon>Hexapoda</taxon>
        <taxon>Insecta</taxon>
        <taxon>Pterygota</taxon>
        <taxon>Neoptera</taxon>
        <taxon>Endopterygota</taxon>
        <taxon>Diptera</taxon>
        <taxon>Brachycera</taxon>
        <taxon>Muscomorpha</taxon>
        <taxon>Ephydroidea</taxon>
        <taxon>Drosophilidae</taxon>
        <taxon>Drosophila</taxon>
        <taxon>Sophophora</taxon>
    </lineage>
</organism>
<keyword id="KW-0067">ATP-binding</keyword>
<keyword id="KW-0418">Kinase</keyword>
<keyword id="KW-0547">Nucleotide-binding</keyword>
<keyword id="KW-0597">Phosphoprotein</keyword>
<keyword id="KW-1185">Reference proteome</keyword>
<keyword id="KW-0677">Repeat</keyword>
<keyword id="KW-0723">Serine/threonine-protein kinase</keyword>
<keyword id="KW-0808">Transferase</keyword>
<evidence type="ECO:0000250" key="1">
    <source>
        <dbReference type="UniProtKB" id="P28523"/>
    </source>
</evidence>
<evidence type="ECO:0000250" key="2">
    <source>
        <dbReference type="UniProtKB" id="Q7PLI7"/>
    </source>
</evidence>
<evidence type="ECO:0000255" key="3"/>
<evidence type="ECO:0000255" key="4">
    <source>
        <dbReference type="PROSITE-ProRule" id="PRU00072"/>
    </source>
</evidence>
<evidence type="ECO:0000255" key="5">
    <source>
        <dbReference type="PROSITE-ProRule" id="PRU00159"/>
    </source>
</evidence>
<evidence type="ECO:0000255" key="6">
    <source>
        <dbReference type="PROSITE-ProRule" id="PRU10027"/>
    </source>
</evidence>
<evidence type="ECO:0000256" key="7">
    <source>
        <dbReference type="SAM" id="MobiDB-lite"/>
    </source>
</evidence>
<evidence type="ECO:0000312" key="8">
    <source>
        <dbReference type="EMBL" id="EDY70661.1"/>
    </source>
</evidence>
<dbReference type="EC" id="2.7.11.1"/>
<dbReference type="EMBL" id="CH379061">
    <property type="protein sequence ID" value="EDY70661.1"/>
    <property type="molecule type" value="Genomic_DNA"/>
</dbReference>
<dbReference type="SMR" id="B5DK35"/>
<dbReference type="FunCoup" id="B5DK35">
    <property type="interactions" value="1317"/>
</dbReference>
<dbReference type="STRING" id="46245.B5DK35"/>
<dbReference type="EnsemblMetazoa" id="FBtr0368464">
    <property type="protein sequence ID" value="FBpp0331227"/>
    <property type="gene ID" value="FBgn0250441"/>
</dbReference>
<dbReference type="EnsemblMetazoa" id="FBtr0376757">
    <property type="protein sequence ID" value="FBpp0337913"/>
    <property type="gene ID" value="FBgn0250441"/>
</dbReference>
<dbReference type="KEGG" id="dpo:6902745"/>
<dbReference type="eggNOG" id="KOG0032">
    <property type="taxonomic scope" value="Eukaryota"/>
</dbReference>
<dbReference type="eggNOG" id="KOG3757">
    <property type="taxonomic scope" value="Eukaryota"/>
</dbReference>
<dbReference type="HOGENOM" id="CLU_000288_94_1_1"/>
<dbReference type="InParanoid" id="B5DK35"/>
<dbReference type="OMA" id="LMTECKV"/>
<dbReference type="Proteomes" id="UP000001819">
    <property type="component" value="Chromosome 4"/>
</dbReference>
<dbReference type="Bgee" id="FBgn0250441">
    <property type="expression patterns" value="Expressed in female reproductive system and 2 other cell types or tissues"/>
</dbReference>
<dbReference type="ExpressionAtlas" id="B5DK35">
    <property type="expression patterns" value="baseline"/>
</dbReference>
<dbReference type="GO" id="GO:0005524">
    <property type="term" value="F:ATP binding"/>
    <property type="evidence" value="ECO:0007669"/>
    <property type="project" value="UniProtKB-KW"/>
</dbReference>
<dbReference type="GO" id="GO:0106310">
    <property type="term" value="F:protein serine kinase activity"/>
    <property type="evidence" value="ECO:0007669"/>
    <property type="project" value="RHEA"/>
</dbReference>
<dbReference type="GO" id="GO:0004674">
    <property type="term" value="F:protein serine/threonine kinase activity"/>
    <property type="evidence" value="ECO:0000250"/>
    <property type="project" value="UniProtKB"/>
</dbReference>
<dbReference type="GO" id="GO:0035556">
    <property type="term" value="P:intracellular signal transduction"/>
    <property type="evidence" value="ECO:0007669"/>
    <property type="project" value="InterPro"/>
</dbReference>
<dbReference type="CDD" id="cd16109">
    <property type="entry name" value="DCX1"/>
    <property type="match status" value="1"/>
</dbReference>
<dbReference type="CDD" id="cd17069">
    <property type="entry name" value="DCX2"/>
    <property type="match status" value="1"/>
</dbReference>
<dbReference type="FunFam" id="3.30.200.20:FF:000042">
    <property type="entry name" value="Aurora kinase A"/>
    <property type="match status" value="1"/>
</dbReference>
<dbReference type="FunFam" id="1.10.510.10:FF:000866">
    <property type="entry name" value="Serine/threonine-protein kinase GA29083"/>
    <property type="match status" value="1"/>
</dbReference>
<dbReference type="FunFam" id="3.10.20.230:FF:000017">
    <property type="entry name" value="Serine/threonine-protein kinase GA29083"/>
    <property type="match status" value="1"/>
</dbReference>
<dbReference type="FunFam" id="3.10.20.230:FF:000021">
    <property type="entry name" value="Serine/threonine-protein kinase GA29083"/>
    <property type="match status" value="1"/>
</dbReference>
<dbReference type="Gene3D" id="3.10.20.230">
    <property type="entry name" value="Doublecortin domain"/>
    <property type="match status" value="2"/>
</dbReference>
<dbReference type="Gene3D" id="1.10.510.10">
    <property type="entry name" value="Transferase(Phosphotransferase) domain 1"/>
    <property type="match status" value="1"/>
</dbReference>
<dbReference type="InterPro" id="IPR003533">
    <property type="entry name" value="Doublecortin_dom"/>
</dbReference>
<dbReference type="InterPro" id="IPR036572">
    <property type="entry name" value="Doublecortin_dom_sf"/>
</dbReference>
<dbReference type="InterPro" id="IPR011009">
    <property type="entry name" value="Kinase-like_dom_sf"/>
</dbReference>
<dbReference type="InterPro" id="IPR000719">
    <property type="entry name" value="Prot_kinase_dom"/>
</dbReference>
<dbReference type="InterPro" id="IPR008271">
    <property type="entry name" value="Ser/Thr_kinase_AS"/>
</dbReference>
<dbReference type="PANTHER" id="PTHR24347">
    <property type="entry name" value="SERINE/THREONINE-PROTEIN KINASE"/>
    <property type="match status" value="1"/>
</dbReference>
<dbReference type="Pfam" id="PF03607">
    <property type="entry name" value="DCX"/>
    <property type="match status" value="2"/>
</dbReference>
<dbReference type="Pfam" id="PF00069">
    <property type="entry name" value="Pkinase"/>
    <property type="match status" value="1"/>
</dbReference>
<dbReference type="SMART" id="SM00537">
    <property type="entry name" value="DCX"/>
    <property type="match status" value="2"/>
</dbReference>
<dbReference type="SMART" id="SM00220">
    <property type="entry name" value="S_TKc"/>
    <property type="match status" value="1"/>
</dbReference>
<dbReference type="SUPFAM" id="SSF89837">
    <property type="entry name" value="Doublecortin (DC)"/>
    <property type="match status" value="2"/>
</dbReference>
<dbReference type="SUPFAM" id="SSF56112">
    <property type="entry name" value="Protein kinase-like (PK-like)"/>
    <property type="match status" value="1"/>
</dbReference>
<dbReference type="PROSITE" id="PS50309">
    <property type="entry name" value="DC"/>
    <property type="match status" value="2"/>
</dbReference>
<dbReference type="PROSITE" id="PS50011">
    <property type="entry name" value="PROTEIN_KINASE_DOM"/>
    <property type="match status" value="1"/>
</dbReference>
<dbReference type="PROSITE" id="PS00108">
    <property type="entry name" value="PROTEIN_KINASE_ST"/>
    <property type="match status" value="1"/>
</dbReference>
<gene>
    <name type="ORF">GA29083</name>
</gene>
<protein>
    <recommendedName>
        <fullName evidence="2 8">Serine/threonine-protein kinase GA29083</fullName>
        <ecNumber>2.7.11.1</ecNumber>
    </recommendedName>
    <alternativeName>
        <fullName>Doublecortin-like and CAM kinase-like protein</fullName>
    </alternativeName>
</protein>
<comment type="catalytic activity">
    <reaction evidence="1">
        <text>L-seryl-[protein] + ATP = O-phospho-L-seryl-[protein] + ADP + H(+)</text>
        <dbReference type="Rhea" id="RHEA:17989"/>
        <dbReference type="Rhea" id="RHEA-COMP:9863"/>
        <dbReference type="Rhea" id="RHEA-COMP:11604"/>
        <dbReference type="ChEBI" id="CHEBI:15378"/>
        <dbReference type="ChEBI" id="CHEBI:29999"/>
        <dbReference type="ChEBI" id="CHEBI:30616"/>
        <dbReference type="ChEBI" id="CHEBI:83421"/>
        <dbReference type="ChEBI" id="CHEBI:456216"/>
        <dbReference type="EC" id="2.7.11.1"/>
    </reaction>
</comment>
<comment type="catalytic activity">
    <reaction evidence="1">
        <text>L-threonyl-[protein] + ATP = O-phospho-L-threonyl-[protein] + ADP + H(+)</text>
        <dbReference type="Rhea" id="RHEA:46608"/>
        <dbReference type="Rhea" id="RHEA-COMP:11060"/>
        <dbReference type="Rhea" id="RHEA-COMP:11605"/>
        <dbReference type="ChEBI" id="CHEBI:15378"/>
        <dbReference type="ChEBI" id="CHEBI:30013"/>
        <dbReference type="ChEBI" id="CHEBI:30616"/>
        <dbReference type="ChEBI" id="CHEBI:61977"/>
        <dbReference type="ChEBI" id="CHEBI:456216"/>
        <dbReference type="EC" id="2.7.11.1"/>
    </reaction>
</comment>
<comment type="similarity">
    <text evidence="3">Belongs to the protein kinase superfamily. CAMK Ser/Thr protein kinase family. CaMK subfamily.</text>
</comment>